<evidence type="ECO:0000250" key="1"/>
<evidence type="ECO:0000250" key="2">
    <source>
        <dbReference type="UniProtKB" id="Q02078"/>
    </source>
</evidence>
<evidence type="ECO:0000250" key="3">
    <source>
        <dbReference type="UniProtKB" id="Q2MJT0"/>
    </source>
</evidence>
<evidence type="ECO:0000255" key="4"/>
<evidence type="ECO:0000255" key="5">
    <source>
        <dbReference type="PROSITE-ProRule" id="PRU00251"/>
    </source>
</evidence>
<evidence type="ECO:0000256" key="6">
    <source>
        <dbReference type="SAM" id="MobiDB-lite"/>
    </source>
</evidence>
<evidence type="ECO:0000269" key="7">
    <source>
    </source>
</evidence>
<evidence type="ECO:0000269" key="8">
    <source>
    </source>
</evidence>
<evidence type="ECO:0000269" key="9">
    <source>
    </source>
</evidence>
<evidence type="ECO:0000303" key="10">
    <source>
    </source>
</evidence>
<evidence type="ECO:0000303" key="11">
    <source>
    </source>
</evidence>
<evidence type="ECO:0000305" key="12"/>
<evidence type="ECO:0007744" key="13">
    <source>
    </source>
</evidence>
<evidence type="ECO:0007744" key="14">
    <source>
    </source>
</evidence>
<evidence type="ECO:0007744" key="15">
    <source>
    </source>
</evidence>
<name>MEF2A_MOUSE</name>
<organism>
    <name type="scientific">Mus musculus</name>
    <name type="common">Mouse</name>
    <dbReference type="NCBI Taxonomy" id="10090"/>
    <lineage>
        <taxon>Eukaryota</taxon>
        <taxon>Metazoa</taxon>
        <taxon>Chordata</taxon>
        <taxon>Craniata</taxon>
        <taxon>Vertebrata</taxon>
        <taxon>Euteleostomi</taxon>
        <taxon>Mammalia</taxon>
        <taxon>Eutheria</taxon>
        <taxon>Euarchontoglires</taxon>
        <taxon>Glires</taxon>
        <taxon>Rodentia</taxon>
        <taxon>Myomorpha</taxon>
        <taxon>Muroidea</taxon>
        <taxon>Muridae</taxon>
        <taxon>Murinae</taxon>
        <taxon>Mus</taxon>
        <taxon>Mus</taxon>
    </lineage>
</organism>
<proteinExistence type="evidence at protein level"/>
<protein>
    <recommendedName>
        <fullName>Myocyte-specific enhancer factor 2A</fullName>
    </recommendedName>
</protein>
<gene>
    <name type="primary">Mef2a</name>
</gene>
<accession>Q60929</accession>
<accession>Q3V155</accession>
<accession>Q4VA09</accession>
<accession>Q6P8Q3</accession>
<comment type="function">
    <text evidence="1">Transcriptional activator which binds specifically to the MEF2 element, 5'-YTA[AT](4)TAR-3', found in numerous muscle-specific genes. Also involved in the activation of numerous growth factor- and stress-induced genes. Mediates cellular functions not only in skeletal and cardiac muscle development, but also in neuronal differentiation and survival. Plays diverse roles in the control of cell growth, survival and apoptosis via p38 MAPK signaling in muscle-specific and/or growth factor-related transcription. In cerebellar granule neurons, phosphorylated and sumoylated MEF2A represses transcription of NUR77 promoting synaptic differentiation. Associates with chromatin to the ZNF16 promoter (By similarity).</text>
</comment>
<comment type="subunit">
    <text evidence="1">Binds DNA as a homo- or heterodimer. Dimerizes with MEF2D. Interacts with HDAC7. Interacts with PIAS1; the interaction enhances sumoylation. Interacts with HDAC4, HDAC9 and SLC2A4RG. Interacts (via the N-terminal) with MAPK7; the interaction results in the phosphorylation and transcriptional activity of MEF2A (By similarity).</text>
</comment>
<comment type="interaction">
    <interactant intactId="EBI-2639094">
        <id>Q60929</id>
    </interactant>
    <interactant intactId="EBI-7132875">
        <id>P12979</id>
        <label>Myog</label>
    </interactant>
    <organismsDiffer>false</organismsDiffer>
    <experiments>2</experiments>
</comment>
<comment type="interaction">
    <interactant intactId="EBI-2639094">
        <id>Q60929</id>
    </interactant>
    <interactant intactId="EBI-2639084">
        <id>P70257-2</id>
        <label>Nfix</label>
    </interactant>
    <organismsDiffer>false</organismsDiffer>
    <experiments>2</experiments>
</comment>
<comment type="subcellular location">
    <subcellularLocation>
        <location>Nucleus</location>
    </subcellularLocation>
</comment>
<comment type="alternative products">
    <event type="alternative splicing"/>
    <isoform>
        <id>Q60929-1</id>
        <name>1</name>
        <sequence type="displayed"/>
    </isoform>
    <isoform>
        <id>Q60929-2</id>
        <name>2</name>
        <sequence type="described" ref="VSP_026031"/>
    </isoform>
    <isoform>
        <id>Q60929-3</id>
        <name>3</name>
        <sequence type="described" ref="VSP_026060 VSP_026031"/>
    </isoform>
</comment>
<comment type="tissue specificity">
    <text evidence="7 9">Widely expressed though mainly restricted to skeletal and cardiac muscle, brain, neurons and lymphocytes. Differentially expressed depending on if isoforms contain the beta domain or not, with the total expression of the beta domain-lacking isoforms vastly exceeding that of the beta domain-containing isoforms. Isoforms containing the beta domain are expressed primarily in skeletal and cardiac muscle and in brain. Also present in lung and testis. Splicing to include the beta domain is induced in differentiating myocytes. Isoforms lacking the beta domain are expressed less abundantly in skeletal muscle, brain and lymphocytes, and are uniquely found in ovary, liver, spleen and kidney. In embryos, the beta domain-containing and beta domain-lacking isoforms are equally expressed. Also expressed cerebellar granule neurons and other regions of the CNS. Highest levels in the olfactory bulb, cortex, hippocampus, thalamus and cerebellum.</text>
</comment>
<comment type="developmental stage">
    <text evidence="9">In the developing cerebellum, increasing levels after birth. The majority of this increase occurs around postnataL day 9 reaching a peak at postnatal day 15-18 which is maintained in adults.</text>
</comment>
<comment type="domain">
    <text evidence="1">The beta domain, missing in a number of isoforms, is required for enhancement of transcriptional activity.</text>
</comment>
<comment type="PTM">
    <text evidence="1 8">Constitutive phosphorylation on Ser-406 promotes Lys-401 sumoylation thus preventing acetylation at this site. Dephosphorylation on Ser-406 by PPP3CA upon neuron depolarization promotes a switch from sumoylation to acetylation on residue Lys-403 leading to inhibition of dendrite claw differentiation. Phosphorylation on Thr-312 and Thr-319 are the main sites involved in p38 MAPK signaling and activate transcription. Phosphorylated on these sites by MAPK14/p38alpha and MAPK11/p38beta, but not by MAPK13/p38delta nor by MAPK12/p38gamma. Phosphorylation on Ser-408 by CDK5 induced by neurotoxicity inhibits MEF2A transcriptional activation leading to apoptosis of cortical neurons. Phosphorylation on Thr-312, Thr-319 and Ser-355 can be induced by EGF (By similarity). Isoform 3 is phosphorylated on Ser-98 and Thr-108.</text>
</comment>
<comment type="PTM">
    <text evidence="1">Sumoylation on Lys-401 is enhanced by PIAS1 and represses transcriptional activity. Phosphorylation on Ser-406 is required for sumoylation. Has no effect on nuclear location nor on DNA binding. Sumoylated with SUMO1 and, to a lesser extent with SUMO2 and SUMO3. PIASx facilitates sumoylation in postsynaptic dendrites in the cerebellar cortex and promotes their morphogenesis (By similarity).</text>
</comment>
<comment type="PTM">
    <text evidence="1">Acetylation on Lys-401 activates transcriptional activity. Acetylated by p300 on several sites in diffentiating myocytes. Acetylation on Lys-4 increases DNA binding and transactivation. Hyperacetylation by p300 leads to enhanced cardiac myocyte growth and heart failure (By similarity).</text>
</comment>
<comment type="PTM">
    <text evidence="1">Proteolytically cleaved in cerebellar granule neurons on several sites by caspase 3 and caspase 7 following neurotoxicity. Preferentially cleaves the CDK5-mediated hyperphosphorylated form which leads to neuron apoptosis and transcriptional inactivation (By similarity).</text>
</comment>
<comment type="similarity">
    <text evidence="12">Belongs to the MEF2 family.</text>
</comment>
<feature type="chain" id="PRO_0000199429" description="Myocyte-specific enhancer factor 2A">
    <location>
        <begin position="1"/>
        <end position="498"/>
    </location>
</feature>
<feature type="domain" description="MADS-box" evidence="5">
    <location>
        <begin position="3"/>
        <end position="57"/>
    </location>
</feature>
<feature type="DNA-binding region" description="Mef2-type" evidence="4">
    <location>
        <begin position="58"/>
        <end position="86"/>
    </location>
</feature>
<feature type="region of interest" description="Disordered" evidence="6">
    <location>
        <begin position="172"/>
        <end position="220"/>
    </location>
</feature>
<feature type="region of interest" description="Disordered" evidence="6">
    <location>
        <begin position="240"/>
        <end position="268"/>
    </location>
</feature>
<feature type="region of interest" description="Required for interaction with MAPKs" evidence="1">
    <location>
        <begin position="264"/>
        <end position="281"/>
    </location>
</feature>
<feature type="region of interest" description="Beta domain" evidence="1">
    <location>
        <begin position="287"/>
        <end position="294"/>
    </location>
</feature>
<feature type="region of interest" description="Disordered" evidence="6">
    <location>
        <begin position="388"/>
        <end position="498"/>
    </location>
</feature>
<feature type="compositionally biased region" description="Polar residues" evidence="6">
    <location>
        <begin position="198"/>
        <end position="220"/>
    </location>
</feature>
<feature type="compositionally biased region" description="Polar residues" evidence="6">
    <location>
        <begin position="388"/>
        <end position="400"/>
    </location>
</feature>
<feature type="compositionally biased region" description="Pro residues" evidence="6">
    <location>
        <begin position="426"/>
        <end position="436"/>
    </location>
</feature>
<feature type="compositionally biased region" description="Low complexity" evidence="6">
    <location>
        <begin position="444"/>
        <end position="457"/>
    </location>
</feature>
<feature type="compositionally biased region" description="Basic and acidic residues" evidence="6">
    <location>
        <begin position="458"/>
        <end position="468"/>
    </location>
</feature>
<feature type="compositionally biased region" description="Basic and acidic residues" evidence="6">
    <location>
        <begin position="479"/>
        <end position="498"/>
    </location>
</feature>
<feature type="site" description="Cleavage" evidence="12">
    <location>
        <begin position="174"/>
        <end position="175"/>
    </location>
</feature>
<feature type="site" description="Cleavage" evidence="12">
    <location>
        <begin position="211"/>
        <end position="212"/>
    </location>
</feature>
<feature type="site" description="Cleavage" evidence="12">
    <location>
        <begin position="457"/>
        <end position="458"/>
    </location>
</feature>
<feature type="modified residue" description="Phosphoserine; by CK2" evidence="1">
    <location>
        <position position="59"/>
    </location>
</feature>
<feature type="modified residue" description="Phosphoserine" evidence="14">
    <location>
        <position position="98"/>
    </location>
</feature>
<feature type="modified residue" description="Phosphoserine" evidence="14">
    <location>
        <position position="108"/>
    </location>
</feature>
<feature type="modified residue" description="Phosphoserine" evidence="14">
    <location>
        <position position="233"/>
    </location>
</feature>
<feature type="modified residue" description="N6-acetyllysine" evidence="15">
    <location>
        <position position="247"/>
    </location>
</feature>
<feature type="modified residue" description="Phosphoserine" evidence="2">
    <location>
        <position position="253"/>
    </location>
</feature>
<feature type="modified residue" description="Phosphothreonine; by MAPK7" evidence="2">
    <location>
        <position position="310"/>
    </location>
</feature>
<feature type="modified residue" description="Phosphothreonine; by NLK" evidence="8">
    <location>
        <position position="310"/>
    </location>
</feature>
<feature type="modified residue" description="Phosphothreonine; by MAPK7" evidence="2">
    <location>
        <position position="317"/>
    </location>
</feature>
<feature type="modified residue" description="Phosphoserine; by MAPK7" evidence="2">
    <location>
        <position position="353"/>
    </location>
</feature>
<feature type="modified residue" description="N6-acetyllysine; alternate" evidence="3">
    <location>
        <position position="401"/>
    </location>
</feature>
<feature type="modified residue" description="Phosphoserine" evidence="2">
    <location>
        <position position="406"/>
    </location>
</feature>
<feature type="modified residue" description="Phosphothreonine" evidence="14">
    <location>
        <position position="413"/>
    </location>
</feature>
<feature type="modified residue" description="Phosphoserine" evidence="2">
    <location>
        <position position="444"/>
    </location>
</feature>
<feature type="cross-link" description="Glycyl lysine isopeptide (Lys-Gly) (interchain with G-Cter in SUMO); alternate" evidence="1">
    <location>
        <position position="401"/>
    </location>
</feature>
<feature type="splice variant" id="VSP_026060" description="In isoform 3." evidence="10">
    <original>TLRKKGLNGCESPDADDYFEHSPLSEDRFSKLNEDSDFIFKRGP</original>
    <variation>ALNKKEHRGCDSPDPDTSYVLTPHTEEKYKKINEEFDNMMRNHKIA</variation>
    <location>
        <begin position="87"/>
        <end position="130"/>
    </location>
</feature>
<feature type="splice variant" id="VSP_026031" description="In isoform 2 and isoform 3." evidence="10 11">
    <location>
        <begin position="287"/>
        <end position="294"/>
    </location>
</feature>
<feature type="sequence conflict" description="In Ref. 1; AAA74030." evidence="12" ref="1">
    <original>S</original>
    <variation>N</variation>
    <location>
        <position position="98"/>
    </location>
</feature>
<feature type="sequence conflict" description="In Ref. 1; AAA74030." evidence="12" ref="1">
    <original>S</original>
    <variation>I</variation>
    <location>
        <position position="116"/>
    </location>
</feature>
<feature type="sequence conflict" description="In Ref. 1; AAA74030." evidence="12" ref="1">
    <original>L</original>
    <variation>F</variation>
    <location>
        <position position="133"/>
    </location>
</feature>
<feature type="sequence conflict" description="In Ref. 1; AAA74030." evidence="12" ref="1">
    <original>A</original>
    <variation>P</variation>
    <location>
        <position position="151"/>
    </location>
</feature>
<feature type="sequence conflict" description="In Ref. 1; AAA74030." evidence="12" ref="1">
    <original>Y</original>
    <variation>D</variation>
    <location>
        <position position="154"/>
    </location>
</feature>
<feature type="sequence conflict" description="In Ref. 1; AAA74030." evidence="12" ref="1">
    <original>DS</original>
    <variation>ET</variation>
    <location>
        <begin position="174"/>
        <end position="175"/>
    </location>
</feature>
<feature type="sequence conflict" description="In Ref. 2; BAE21297." evidence="12" ref="2">
    <original>G</original>
    <variation>S</variation>
    <location>
        <position position="201"/>
    </location>
</feature>
<feature type="sequence conflict" description="In Ref. 1; AAA74030." evidence="12" ref="1">
    <original>V</original>
    <variation>A</variation>
    <location>
        <position position="274"/>
    </location>
</feature>
<feature type="sequence conflict" description="In Ref. 1; AAA74030." evidence="12" ref="1">
    <original>Q</original>
    <variation>E</variation>
    <location>
        <position position="367"/>
    </location>
</feature>
<feature type="sequence conflict" description="In Ref. 1; AAA74030." evidence="12" ref="1">
    <original>AA</original>
    <variation>TT</variation>
    <location>
        <begin position="373"/>
        <end position="374"/>
    </location>
</feature>
<feature type="sequence conflict" description="In Ref. 1; AAA74030." evidence="12" ref="1">
    <original>QQQQQ</original>
    <variation>HHHHH</variation>
    <location>
        <begin position="419"/>
        <end position="423"/>
    </location>
</feature>
<feature type="sequence conflict" description="In Ref. 1; AAA74030." evidence="12" ref="1">
    <original>P</original>
    <variation>A</variation>
    <location>
        <position position="478"/>
    </location>
</feature>
<feature type="modified residue" description="Phosphoserine" evidence="13 14">
    <location sequence="Q60929-3">
        <position position="98"/>
    </location>
</feature>
<feature type="modified residue" description="Phosphothreonine" evidence="13 14">
    <location sequence="Q60929-3">
        <position position="108"/>
    </location>
</feature>
<sequence>MGRKKIQITRIMDERNRQVTFTKRKFGLMKKAYELSVLCDCEIALIIFNSSNKLFQYASTDMDKVLLKYTEYNEPHESRTNSDIVETLRKKGLNGCESPDADDYFEHSPLSEDRFSKLNEDSDFIFKRGPPGLPPQNFSMSVTVPVTSPNALSYTNPGSSLVSPSLAASSTLADSSMLSPPPATLHRNVSPGAPQRPPSTGSASGMLSTTDLTVPNGAGNSPVGNGFVNSRASPNLIGNTGANSLGKVMPTKSPPPPGGGSLGMNSRKPDLRVVIPPSSKGMMPPLSEEEELELNAQRISSSQATQPLATPVVSVTTPSLPPQGLVYSAMPTAYNTDYSLTSADLSALQGFTSPGMLSLGQASAWQQHHLGQAALSSLVAGGQLSQGSNLSINTNQNINIKSEPISPPRDRMTPSGFQQQQQQPQQQPPPQPPQPQPRQEMGRSPVDSLSSSSSSYDGSDREDPRGDFHSPIVLGRPPNTEDRESPSVKRMRMDTWVT</sequence>
<keyword id="KW-0007">Acetylation</keyword>
<keyword id="KW-0010">Activator</keyword>
<keyword id="KW-0025">Alternative splicing</keyword>
<keyword id="KW-0053">Apoptosis</keyword>
<keyword id="KW-0217">Developmental protein</keyword>
<keyword id="KW-0221">Differentiation</keyword>
<keyword id="KW-0238">DNA-binding</keyword>
<keyword id="KW-1017">Isopeptide bond</keyword>
<keyword id="KW-0524">Neurogenesis</keyword>
<keyword id="KW-0539">Nucleus</keyword>
<keyword id="KW-0597">Phosphoprotein</keyword>
<keyword id="KW-1185">Reference proteome</keyword>
<keyword id="KW-0804">Transcription</keyword>
<keyword id="KW-0805">Transcription regulation</keyword>
<keyword id="KW-0832">Ubl conjugation</keyword>
<dbReference type="EMBL" id="U30823">
    <property type="protein sequence ID" value="AAA74030.1"/>
    <property type="molecule type" value="mRNA"/>
</dbReference>
<dbReference type="EMBL" id="AK132678">
    <property type="protein sequence ID" value="BAE21297.1"/>
    <property type="molecule type" value="mRNA"/>
</dbReference>
<dbReference type="EMBL" id="BC061128">
    <property type="protein sequence ID" value="AAH61128.1"/>
    <property type="molecule type" value="mRNA"/>
</dbReference>
<dbReference type="EMBL" id="BC096598">
    <property type="protein sequence ID" value="AAH96598.1"/>
    <property type="molecule type" value="mRNA"/>
</dbReference>
<dbReference type="CCDS" id="CCDS39981.1">
    <molecule id="Q60929-1"/>
</dbReference>
<dbReference type="CCDS" id="CCDS71979.1">
    <molecule id="Q60929-3"/>
</dbReference>
<dbReference type="CCDS" id="CCDS71980.1">
    <molecule id="Q60929-2"/>
</dbReference>
<dbReference type="RefSeq" id="NP_001028885.1">
    <molecule id="Q60929-1"/>
    <property type="nucleotide sequence ID" value="NM_001033713.2"/>
</dbReference>
<dbReference type="RefSeq" id="NP_001278120.1">
    <molecule id="Q60929-3"/>
    <property type="nucleotide sequence ID" value="NM_001291191.2"/>
</dbReference>
<dbReference type="RefSeq" id="NP_001278121.1">
    <molecule id="Q60929-3"/>
    <property type="nucleotide sequence ID" value="NM_001291192.1"/>
</dbReference>
<dbReference type="RefSeq" id="NP_001278124.1">
    <molecule id="Q60929-2"/>
    <property type="nucleotide sequence ID" value="NM_001291195.1"/>
</dbReference>
<dbReference type="RefSeq" id="NP_001278125.1">
    <property type="nucleotide sequence ID" value="NM_001291196.1"/>
</dbReference>
<dbReference type="RefSeq" id="NP_001344254.1">
    <molecule id="Q60929-1"/>
    <property type="nucleotide sequence ID" value="NM_001357325.1"/>
</dbReference>
<dbReference type="RefSeq" id="XP_006540749.1">
    <property type="nucleotide sequence ID" value="XM_006540686.3"/>
</dbReference>
<dbReference type="RefSeq" id="XP_011249116.1">
    <property type="nucleotide sequence ID" value="XM_011250814.2"/>
</dbReference>
<dbReference type="RefSeq" id="XP_017177500.1">
    <property type="nucleotide sequence ID" value="XM_017322011.1"/>
</dbReference>
<dbReference type="RefSeq" id="XP_030098051.1">
    <molecule id="Q60929-2"/>
    <property type="nucleotide sequence ID" value="XM_030242191.2"/>
</dbReference>
<dbReference type="RefSeq" id="XP_036008628.1">
    <molecule id="Q60929-1"/>
    <property type="nucleotide sequence ID" value="XM_036152735.1"/>
</dbReference>
<dbReference type="RefSeq" id="XP_036008629.1">
    <molecule id="Q60929-1"/>
    <property type="nucleotide sequence ID" value="XM_036152736.1"/>
</dbReference>
<dbReference type="RefSeq" id="XP_036008631.1">
    <molecule id="Q60929-2"/>
    <property type="nucleotide sequence ID" value="XM_036152738.1"/>
</dbReference>
<dbReference type="SMR" id="Q60929"/>
<dbReference type="BioGRID" id="201381">
    <property type="interactions" value="3"/>
</dbReference>
<dbReference type="FunCoup" id="Q60929">
    <property type="interactions" value="2025"/>
</dbReference>
<dbReference type="IntAct" id="Q60929">
    <property type="interactions" value="4"/>
</dbReference>
<dbReference type="MINT" id="Q60929"/>
<dbReference type="STRING" id="10090.ENSMUSP00000117496"/>
<dbReference type="GlyGen" id="Q60929">
    <property type="glycosylation" value="1 site, 1 N-linked glycan (1 site)"/>
</dbReference>
<dbReference type="iPTMnet" id="Q60929"/>
<dbReference type="PhosphoSitePlus" id="Q60929"/>
<dbReference type="jPOST" id="Q60929"/>
<dbReference type="PaxDb" id="10090-ENSMUSP00000117496"/>
<dbReference type="PeptideAtlas" id="Q60929"/>
<dbReference type="ProteomicsDB" id="295991">
    <molecule id="Q60929-1"/>
</dbReference>
<dbReference type="ProteomicsDB" id="295992">
    <molecule id="Q60929-2"/>
</dbReference>
<dbReference type="ProteomicsDB" id="295993">
    <molecule id="Q60929-3"/>
</dbReference>
<dbReference type="Pumba" id="Q60929"/>
<dbReference type="Antibodypedia" id="3854">
    <property type="antibodies" value="1049 antibodies from 44 providers"/>
</dbReference>
<dbReference type="Ensembl" id="ENSMUST00000032776.15">
    <molecule id="Q60929-3"/>
    <property type="protein sequence ID" value="ENSMUSP00000032776.9"/>
    <property type="gene ID" value="ENSMUSG00000030557.18"/>
</dbReference>
<dbReference type="Ensembl" id="ENSMUST00000076325.12">
    <molecule id="Q60929-3"/>
    <property type="protein sequence ID" value="ENSMUSP00000075664.6"/>
    <property type="gene ID" value="ENSMUSG00000030557.18"/>
</dbReference>
<dbReference type="Ensembl" id="ENSMUST00000107476.8">
    <molecule id="Q60929-2"/>
    <property type="protein sequence ID" value="ENSMUSP00000103100.2"/>
    <property type="gene ID" value="ENSMUSG00000030557.18"/>
</dbReference>
<dbReference type="Ensembl" id="ENSMUST00000135493.8">
    <molecule id="Q60929-1"/>
    <property type="protein sequence ID" value="ENSMUSP00000138566.2"/>
    <property type="gene ID" value="ENSMUSG00000030557.18"/>
</dbReference>
<dbReference type="Ensembl" id="ENSMUST00000156690.8">
    <molecule id="Q60929-1"/>
    <property type="protein sequence ID" value="ENSMUSP00000117496.2"/>
    <property type="gene ID" value="ENSMUSG00000030557.18"/>
</dbReference>
<dbReference type="GeneID" id="17258"/>
<dbReference type="KEGG" id="mmu:17258"/>
<dbReference type="UCSC" id="uc009hie.3">
    <molecule id="Q60929-3"/>
    <property type="organism name" value="mouse"/>
</dbReference>
<dbReference type="UCSC" id="uc009hif.3">
    <molecule id="Q60929-1"/>
    <property type="organism name" value="mouse"/>
</dbReference>
<dbReference type="UCSC" id="uc009hig.3">
    <molecule id="Q60929-2"/>
    <property type="organism name" value="mouse"/>
</dbReference>
<dbReference type="AGR" id="MGI:99532"/>
<dbReference type="CTD" id="4205"/>
<dbReference type="MGI" id="MGI:99532">
    <property type="gene designation" value="Mef2a"/>
</dbReference>
<dbReference type="VEuPathDB" id="HostDB:ENSMUSG00000030557"/>
<dbReference type="eggNOG" id="KOG0014">
    <property type="taxonomic scope" value="Eukaryota"/>
</dbReference>
<dbReference type="GeneTree" id="ENSGT00940000156205"/>
<dbReference type="HOGENOM" id="CLU_022902_4_0_1"/>
<dbReference type="InParanoid" id="Q60929"/>
<dbReference type="OMA" id="MNTQRIS"/>
<dbReference type="OrthoDB" id="1898716at2759"/>
<dbReference type="PhylomeDB" id="Q60929"/>
<dbReference type="TreeFam" id="TF314067"/>
<dbReference type="BioGRID-ORCS" id="17258">
    <property type="hits" value="4 hits in 79 CRISPR screens"/>
</dbReference>
<dbReference type="ChiTaRS" id="Mef2a">
    <property type="organism name" value="mouse"/>
</dbReference>
<dbReference type="PRO" id="PR:Q60929"/>
<dbReference type="Proteomes" id="UP000000589">
    <property type="component" value="Chromosome 7"/>
</dbReference>
<dbReference type="RNAct" id="Q60929">
    <property type="molecule type" value="protein"/>
</dbReference>
<dbReference type="Bgee" id="ENSMUSG00000030557">
    <property type="expression patterns" value="Expressed in medial dorsal nucleus of thalamus and 272 other cell types or tissues"/>
</dbReference>
<dbReference type="ExpressionAtlas" id="Q60929">
    <property type="expression patterns" value="baseline and differential"/>
</dbReference>
<dbReference type="GO" id="GO:0000785">
    <property type="term" value="C:chromatin"/>
    <property type="evidence" value="ECO:0000314"/>
    <property type="project" value="BHF-UCL"/>
</dbReference>
<dbReference type="GO" id="GO:0005829">
    <property type="term" value="C:cytosol"/>
    <property type="evidence" value="ECO:0007669"/>
    <property type="project" value="Ensembl"/>
</dbReference>
<dbReference type="GO" id="GO:0005654">
    <property type="term" value="C:nucleoplasm"/>
    <property type="evidence" value="ECO:0007669"/>
    <property type="project" value="Ensembl"/>
</dbReference>
<dbReference type="GO" id="GO:0005634">
    <property type="term" value="C:nucleus"/>
    <property type="evidence" value="ECO:0000314"/>
    <property type="project" value="UniProtKB"/>
</dbReference>
<dbReference type="GO" id="GO:0005667">
    <property type="term" value="C:transcription regulator complex"/>
    <property type="evidence" value="ECO:0007669"/>
    <property type="project" value="Ensembl"/>
</dbReference>
<dbReference type="GO" id="GO:0003682">
    <property type="term" value="F:chromatin binding"/>
    <property type="evidence" value="ECO:0000314"/>
    <property type="project" value="MGI"/>
</dbReference>
<dbReference type="GO" id="GO:0003677">
    <property type="term" value="F:DNA binding"/>
    <property type="evidence" value="ECO:0000314"/>
    <property type="project" value="MGI"/>
</dbReference>
<dbReference type="GO" id="GO:0001228">
    <property type="term" value="F:DNA-binding transcription activator activity, RNA polymerase II-specific"/>
    <property type="evidence" value="ECO:0000314"/>
    <property type="project" value="NTNU_SB"/>
</dbReference>
<dbReference type="GO" id="GO:0003700">
    <property type="term" value="F:DNA-binding transcription factor activity"/>
    <property type="evidence" value="ECO:0000314"/>
    <property type="project" value="MGI"/>
</dbReference>
<dbReference type="GO" id="GO:0000981">
    <property type="term" value="F:DNA-binding transcription factor activity, RNA polymerase II-specific"/>
    <property type="evidence" value="ECO:0000314"/>
    <property type="project" value="MGI"/>
</dbReference>
<dbReference type="GO" id="GO:0140297">
    <property type="term" value="F:DNA-binding transcription factor binding"/>
    <property type="evidence" value="ECO:0000353"/>
    <property type="project" value="UniProtKB"/>
</dbReference>
<dbReference type="GO" id="GO:0035035">
    <property type="term" value="F:histone acetyltransferase binding"/>
    <property type="evidence" value="ECO:0000250"/>
    <property type="project" value="UniProtKB"/>
</dbReference>
<dbReference type="GO" id="GO:0042826">
    <property type="term" value="F:histone deacetylase binding"/>
    <property type="evidence" value="ECO:0000250"/>
    <property type="project" value="UniProtKB"/>
</dbReference>
<dbReference type="GO" id="GO:0046982">
    <property type="term" value="F:protein heterodimerization activity"/>
    <property type="evidence" value="ECO:0007669"/>
    <property type="project" value="Ensembl"/>
</dbReference>
<dbReference type="GO" id="GO:0019901">
    <property type="term" value="F:protein kinase binding"/>
    <property type="evidence" value="ECO:0000353"/>
    <property type="project" value="UniProtKB"/>
</dbReference>
<dbReference type="GO" id="GO:0000978">
    <property type="term" value="F:RNA polymerase II cis-regulatory region sequence-specific DNA binding"/>
    <property type="evidence" value="ECO:0000314"/>
    <property type="project" value="NTNU_SB"/>
</dbReference>
<dbReference type="GO" id="GO:0000977">
    <property type="term" value="F:RNA polymerase II transcription regulatory region sequence-specific DNA binding"/>
    <property type="evidence" value="ECO:0000250"/>
    <property type="project" value="UniProtKB"/>
</dbReference>
<dbReference type="GO" id="GO:0061629">
    <property type="term" value="F:RNA polymerase II-specific DNA-binding transcription factor binding"/>
    <property type="evidence" value="ECO:0007669"/>
    <property type="project" value="Ensembl"/>
</dbReference>
<dbReference type="GO" id="GO:0043565">
    <property type="term" value="F:sequence-specific DNA binding"/>
    <property type="evidence" value="ECO:0000314"/>
    <property type="project" value="MGI"/>
</dbReference>
<dbReference type="GO" id="GO:0046332">
    <property type="term" value="F:SMAD binding"/>
    <property type="evidence" value="ECO:0000250"/>
    <property type="project" value="UniProtKB"/>
</dbReference>
<dbReference type="GO" id="GO:0006915">
    <property type="term" value="P:apoptotic process"/>
    <property type="evidence" value="ECO:0007669"/>
    <property type="project" value="UniProtKB-KW"/>
</dbReference>
<dbReference type="GO" id="GO:0061337">
    <property type="term" value="P:cardiac conduction"/>
    <property type="evidence" value="ECO:0000315"/>
    <property type="project" value="UniProtKB"/>
</dbReference>
<dbReference type="GO" id="GO:0071277">
    <property type="term" value="P:cellular response to calcium ion"/>
    <property type="evidence" value="ECO:0000250"/>
    <property type="project" value="UniProtKB"/>
</dbReference>
<dbReference type="GO" id="GO:0006351">
    <property type="term" value="P:DNA-templated transcription"/>
    <property type="evidence" value="ECO:0007669"/>
    <property type="project" value="Ensembl"/>
</dbReference>
<dbReference type="GO" id="GO:0070375">
    <property type="term" value="P:ERK5 cascade"/>
    <property type="evidence" value="ECO:0000250"/>
    <property type="project" value="UniProtKB"/>
</dbReference>
<dbReference type="GO" id="GO:0000165">
    <property type="term" value="P:MAPK cascade"/>
    <property type="evidence" value="ECO:0000250"/>
    <property type="project" value="UniProtKB"/>
</dbReference>
<dbReference type="GO" id="GO:0000002">
    <property type="term" value="P:mitochondrial genome maintenance"/>
    <property type="evidence" value="ECO:0000315"/>
    <property type="project" value="UniProtKB"/>
</dbReference>
<dbReference type="GO" id="GO:0048311">
    <property type="term" value="P:mitochondrion distribution"/>
    <property type="evidence" value="ECO:0000315"/>
    <property type="project" value="UniProtKB"/>
</dbReference>
<dbReference type="GO" id="GO:0000122">
    <property type="term" value="P:negative regulation of transcription by RNA polymerase II"/>
    <property type="evidence" value="ECO:0000250"/>
    <property type="project" value="UniProtKB"/>
</dbReference>
<dbReference type="GO" id="GO:0007399">
    <property type="term" value="P:nervous system development"/>
    <property type="evidence" value="ECO:0007669"/>
    <property type="project" value="UniProtKB-KW"/>
</dbReference>
<dbReference type="GO" id="GO:0010613">
    <property type="term" value="P:positive regulation of cardiac muscle hypertrophy"/>
    <property type="evidence" value="ECO:0007669"/>
    <property type="project" value="Ensembl"/>
</dbReference>
<dbReference type="GO" id="GO:0046326">
    <property type="term" value="P:positive regulation of D-glucose import"/>
    <property type="evidence" value="ECO:0000314"/>
    <property type="project" value="MGI"/>
</dbReference>
<dbReference type="GO" id="GO:0045893">
    <property type="term" value="P:positive regulation of DNA-templated transcription"/>
    <property type="evidence" value="ECO:0000314"/>
    <property type="project" value="MGI"/>
</dbReference>
<dbReference type="GO" id="GO:0010628">
    <property type="term" value="P:positive regulation of gene expression"/>
    <property type="evidence" value="ECO:0000314"/>
    <property type="project" value="MGI"/>
</dbReference>
<dbReference type="GO" id="GO:0045944">
    <property type="term" value="P:positive regulation of transcription by RNA polymerase II"/>
    <property type="evidence" value="ECO:0000314"/>
    <property type="project" value="NTNU_SB"/>
</dbReference>
<dbReference type="GO" id="GO:0006355">
    <property type="term" value="P:regulation of DNA-templated transcription"/>
    <property type="evidence" value="ECO:0000314"/>
    <property type="project" value="MGI"/>
</dbReference>
<dbReference type="GO" id="GO:0055005">
    <property type="term" value="P:ventricular cardiac myofibril assembly"/>
    <property type="evidence" value="ECO:0000315"/>
    <property type="project" value="UniProtKB"/>
</dbReference>
<dbReference type="CDD" id="cd00265">
    <property type="entry name" value="MADS_MEF2_like"/>
    <property type="match status" value="1"/>
</dbReference>
<dbReference type="FunFam" id="3.40.1810.10:FF:000001">
    <property type="entry name" value="Myocyte-specific enhancer factor 2A homolog"/>
    <property type="match status" value="1"/>
</dbReference>
<dbReference type="Gene3D" id="3.40.1810.10">
    <property type="entry name" value="Transcription factor, MADS-box"/>
    <property type="match status" value="1"/>
</dbReference>
<dbReference type="InterPro" id="IPR022102">
    <property type="entry name" value="HJURP_C"/>
</dbReference>
<dbReference type="InterPro" id="IPR033896">
    <property type="entry name" value="MEF2-like_N"/>
</dbReference>
<dbReference type="InterPro" id="IPR002100">
    <property type="entry name" value="TF_MADSbox"/>
</dbReference>
<dbReference type="InterPro" id="IPR036879">
    <property type="entry name" value="TF_MADSbox_sf"/>
</dbReference>
<dbReference type="PANTHER" id="PTHR11945">
    <property type="entry name" value="MADS BOX PROTEIN"/>
    <property type="match status" value="1"/>
</dbReference>
<dbReference type="PANTHER" id="PTHR11945:SF534">
    <property type="entry name" value="MYOCYTE-SPECIFIC ENHANCER FACTOR 2"/>
    <property type="match status" value="1"/>
</dbReference>
<dbReference type="Pfam" id="PF12347">
    <property type="entry name" value="HJURP_C"/>
    <property type="match status" value="1"/>
</dbReference>
<dbReference type="Pfam" id="PF00319">
    <property type="entry name" value="SRF-TF"/>
    <property type="match status" value="1"/>
</dbReference>
<dbReference type="PRINTS" id="PR00404">
    <property type="entry name" value="MADSDOMAIN"/>
</dbReference>
<dbReference type="SMART" id="SM00432">
    <property type="entry name" value="MADS"/>
    <property type="match status" value="1"/>
</dbReference>
<dbReference type="SUPFAM" id="SSF55455">
    <property type="entry name" value="SRF-like"/>
    <property type="match status" value="1"/>
</dbReference>
<dbReference type="PROSITE" id="PS00350">
    <property type="entry name" value="MADS_BOX_1"/>
    <property type="match status" value="1"/>
</dbReference>
<dbReference type="PROSITE" id="PS50066">
    <property type="entry name" value="MADS_BOX_2"/>
    <property type="match status" value="1"/>
</dbReference>
<reference key="1">
    <citation type="journal article" date="1996" name="Brain Res. Mol. Brain Res.">
        <title>The expression of MEF2 genes is implicated in CNS neuronal differentiation.</title>
        <authorList>
            <person name="Lin X."/>
            <person name="Shah S."/>
            <person name="Bulleit R.F."/>
        </authorList>
    </citation>
    <scope>NUCLEOTIDE SEQUENCE [MRNA] (ISOFORM 1)</scope>
    <scope>TISSUE SPECIFICITY</scope>
    <scope>DEVELOPMENTAL STAGE</scope>
    <source>
        <tissue>Cerebellum</tissue>
    </source>
</reference>
<reference key="2">
    <citation type="journal article" date="2005" name="Science">
        <title>The transcriptional landscape of the mammalian genome.</title>
        <authorList>
            <person name="Carninci P."/>
            <person name="Kasukawa T."/>
            <person name="Katayama S."/>
            <person name="Gough J."/>
            <person name="Frith M.C."/>
            <person name="Maeda N."/>
            <person name="Oyama R."/>
            <person name="Ravasi T."/>
            <person name="Lenhard B."/>
            <person name="Wells C."/>
            <person name="Kodzius R."/>
            <person name="Shimokawa K."/>
            <person name="Bajic V.B."/>
            <person name="Brenner S.E."/>
            <person name="Batalov S."/>
            <person name="Forrest A.R."/>
            <person name="Zavolan M."/>
            <person name="Davis M.J."/>
            <person name="Wilming L.G."/>
            <person name="Aidinis V."/>
            <person name="Allen J.E."/>
            <person name="Ambesi-Impiombato A."/>
            <person name="Apweiler R."/>
            <person name="Aturaliya R.N."/>
            <person name="Bailey T.L."/>
            <person name="Bansal M."/>
            <person name="Baxter L."/>
            <person name="Beisel K.W."/>
            <person name="Bersano T."/>
            <person name="Bono H."/>
            <person name="Chalk A.M."/>
            <person name="Chiu K.P."/>
            <person name="Choudhary V."/>
            <person name="Christoffels A."/>
            <person name="Clutterbuck D.R."/>
            <person name="Crowe M.L."/>
            <person name="Dalla E."/>
            <person name="Dalrymple B.P."/>
            <person name="de Bono B."/>
            <person name="Della Gatta G."/>
            <person name="di Bernardo D."/>
            <person name="Down T."/>
            <person name="Engstrom P."/>
            <person name="Fagiolini M."/>
            <person name="Faulkner G."/>
            <person name="Fletcher C.F."/>
            <person name="Fukushima T."/>
            <person name="Furuno M."/>
            <person name="Futaki S."/>
            <person name="Gariboldi M."/>
            <person name="Georgii-Hemming P."/>
            <person name="Gingeras T.R."/>
            <person name="Gojobori T."/>
            <person name="Green R.E."/>
            <person name="Gustincich S."/>
            <person name="Harbers M."/>
            <person name="Hayashi Y."/>
            <person name="Hensch T.K."/>
            <person name="Hirokawa N."/>
            <person name="Hill D."/>
            <person name="Huminiecki L."/>
            <person name="Iacono M."/>
            <person name="Ikeo K."/>
            <person name="Iwama A."/>
            <person name="Ishikawa T."/>
            <person name="Jakt M."/>
            <person name="Kanapin A."/>
            <person name="Katoh M."/>
            <person name="Kawasawa Y."/>
            <person name="Kelso J."/>
            <person name="Kitamura H."/>
            <person name="Kitano H."/>
            <person name="Kollias G."/>
            <person name="Krishnan S.P."/>
            <person name="Kruger A."/>
            <person name="Kummerfeld S.K."/>
            <person name="Kurochkin I.V."/>
            <person name="Lareau L.F."/>
            <person name="Lazarevic D."/>
            <person name="Lipovich L."/>
            <person name="Liu J."/>
            <person name="Liuni S."/>
            <person name="McWilliam S."/>
            <person name="Madan Babu M."/>
            <person name="Madera M."/>
            <person name="Marchionni L."/>
            <person name="Matsuda H."/>
            <person name="Matsuzawa S."/>
            <person name="Miki H."/>
            <person name="Mignone F."/>
            <person name="Miyake S."/>
            <person name="Morris K."/>
            <person name="Mottagui-Tabar S."/>
            <person name="Mulder N."/>
            <person name="Nakano N."/>
            <person name="Nakauchi H."/>
            <person name="Ng P."/>
            <person name="Nilsson R."/>
            <person name="Nishiguchi S."/>
            <person name="Nishikawa S."/>
            <person name="Nori F."/>
            <person name="Ohara O."/>
            <person name="Okazaki Y."/>
            <person name="Orlando V."/>
            <person name="Pang K.C."/>
            <person name="Pavan W.J."/>
            <person name="Pavesi G."/>
            <person name="Pesole G."/>
            <person name="Petrovsky N."/>
            <person name="Piazza S."/>
            <person name="Reed J."/>
            <person name="Reid J.F."/>
            <person name="Ring B.Z."/>
            <person name="Ringwald M."/>
            <person name="Rost B."/>
            <person name="Ruan Y."/>
            <person name="Salzberg S.L."/>
            <person name="Sandelin A."/>
            <person name="Schneider C."/>
            <person name="Schoenbach C."/>
            <person name="Sekiguchi K."/>
            <person name="Semple C.A."/>
            <person name="Seno S."/>
            <person name="Sessa L."/>
            <person name="Sheng Y."/>
            <person name="Shibata Y."/>
            <person name="Shimada H."/>
            <person name="Shimada K."/>
            <person name="Silva D."/>
            <person name="Sinclair B."/>
            <person name="Sperling S."/>
            <person name="Stupka E."/>
            <person name="Sugiura K."/>
            <person name="Sultana R."/>
            <person name="Takenaka Y."/>
            <person name="Taki K."/>
            <person name="Tammoja K."/>
            <person name="Tan S.L."/>
            <person name="Tang S."/>
            <person name="Taylor M.S."/>
            <person name="Tegner J."/>
            <person name="Teichmann S.A."/>
            <person name="Ueda H.R."/>
            <person name="van Nimwegen E."/>
            <person name="Verardo R."/>
            <person name="Wei C.L."/>
            <person name="Yagi K."/>
            <person name="Yamanishi H."/>
            <person name="Zabarovsky E."/>
            <person name="Zhu S."/>
            <person name="Zimmer A."/>
            <person name="Hide W."/>
            <person name="Bult C."/>
            <person name="Grimmond S.M."/>
            <person name="Teasdale R.D."/>
            <person name="Liu E.T."/>
            <person name="Brusic V."/>
            <person name="Quackenbush J."/>
            <person name="Wahlestedt C."/>
            <person name="Mattick J.S."/>
            <person name="Hume D.A."/>
            <person name="Kai C."/>
            <person name="Sasaki D."/>
            <person name="Tomaru Y."/>
            <person name="Fukuda S."/>
            <person name="Kanamori-Katayama M."/>
            <person name="Suzuki M."/>
            <person name="Aoki J."/>
            <person name="Arakawa T."/>
            <person name="Iida J."/>
            <person name="Imamura K."/>
            <person name="Itoh M."/>
            <person name="Kato T."/>
            <person name="Kawaji H."/>
            <person name="Kawagashira N."/>
            <person name="Kawashima T."/>
            <person name="Kojima M."/>
            <person name="Kondo S."/>
            <person name="Konno H."/>
            <person name="Nakano K."/>
            <person name="Ninomiya N."/>
            <person name="Nishio T."/>
            <person name="Okada M."/>
            <person name="Plessy C."/>
            <person name="Shibata K."/>
            <person name="Shiraki T."/>
            <person name="Suzuki S."/>
            <person name="Tagami M."/>
            <person name="Waki K."/>
            <person name="Watahiki A."/>
            <person name="Okamura-Oho Y."/>
            <person name="Suzuki H."/>
            <person name="Kawai J."/>
            <person name="Hayashizaki Y."/>
        </authorList>
    </citation>
    <scope>NUCLEOTIDE SEQUENCE [LARGE SCALE MRNA] (ISOFORM 2)</scope>
    <source>
        <strain>C57BL/6J</strain>
        <tissue>Testis</tissue>
    </source>
</reference>
<reference key="3">
    <citation type="journal article" date="2004" name="Genome Res.">
        <title>The status, quality, and expansion of the NIH full-length cDNA project: the Mammalian Gene Collection (MGC).</title>
        <authorList>
            <consortium name="The MGC Project Team"/>
        </authorList>
    </citation>
    <scope>NUCLEOTIDE SEQUENCE [LARGE SCALE MRNA] (ISOFORMS 1 AND 3)</scope>
    <source>
        <strain>NMRI</strain>
        <tissue>Brain</tissue>
        <tissue>Mammary tumor</tissue>
    </source>
</reference>
<reference key="4">
    <citation type="journal article" date="2001" name="J. Biol. Chem.">
        <title>Mechanism for nucleocytoplasmic shuttling of histone deacetylase 7.</title>
        <authorList>
            <person name="Kao H.-Y."/>
            <person name="Verdel A."/>
            <person name="Tsai C.-C."/>
            <person name="Simon C."/>
            <person name="Juguilon H."/>
            <person name="Khochbin S."/>
        </authorList>
    </citation>
    <scope>INTERACTION WITH HDAC7</scope>
</reference>
<reference key="5">
    <citation type="journal article" date="2005" name="J. Biol. Chem.">
        <title>Alternative pre-mRNA splicing governs expression of a conserved acidic transactivation domain in myocyte enhancer factor 2 factors of striated muscle and brain.</title>
        <authorList>
            <person name="Zhu B."/>
            <person name="Ramachandran B."/>
            <person name="Gulick T."/>
        </authorList>
    </citation>
    <scope>TISSUE SPECIFICITY OF ISOFORMS</scope>
</reference>
<reference key="6">
    <citation type="journal article" date="2007" name="Mol. Cell. Biol.">
        <title>Nemo-like kinase-myocyte enhancer factor 2A signaling regulates anterior formation in Xenopus development.</title>
        <authorList>
            <person name="Satoh K."/>
            <person name="Ohnishi J."/>
            <person name="Sato A."/>
            <person name="Takeyama M."/>
            <person name="Iemura S."/>
            <person name="Natsume T."/>
            <person name="Shibuya H."/>
        </authorList>
    </citation>
    <scope>INTERACTION WITH NLK</scope>
    <scope>PHOSPHORYLATION AT THR-310</scope>
</reference>
<reference key="7">
    <citation type="journal article" date="2007" name="Proc. Natl. Acad. Sci. U.S.A.">
        <title>Large-scale phosphorylation analysis of mouse liver.</title>
        <authorList>
            <person name="Villen J."/>
            <person name="Beausoleil S.A."/>
            <person name="Gerber S.A."/>
            <person name="Gygi S.P."/>
        </authorList>
    </citation>
    <scope>PHOSPHORYLATION [LARGE SCALE ANALYSIS] AT SER-98 AND THR-108 (ISOFORM 3)</scope>
    <scope>IDENTIFICATION BY MASS SPECTROMETRY [LARGE SCALE ANALYSIS]</scope>
    <source>
        <tissue>Liver</tissue>
    </source>
</reference>
<reference key="8">
    <citation type="journal article" date="2010" name="Cell">
        <title>A tissue-specific atlas of mouse protein phosphorylation and expression.</title>
        <authorList>
            <person name="Huttlin E.L."/>
            <person name="Jedrychowski M.P."/>
            <person name="Elias J.E."/>
            <person name="Goswami T."/>
            <person name="Rad R."/>
            <person name="Beausoleil S.A."/>
            <person name="Villen J."/>
            <person name="Haas W."/>
            <person name="Sowa M.E."/>
            <person name="Gygi S.P."/>
        </authorList>
    </citation>
    <scope>PHOSPHORYLATION [LARGE SCALE ANALYSIS] AT SER-98; SER-108; SER-233 AND THR-413</scope>
    <scope>PHOSPHORYLATION [LARGE SCALE ANALYSIS] AT SER-98 AND THR-108 (ISOFORM 3)</scope>
    <scope>IDENTIFICATION BY MASS SPECTROMETRY [LARGE SCALE ANALYSIS]</scope>
    <source>
        <tissue>Brain</tissue>
        <tissue>Brown adipose tissue</tissue>
        <tissue>Heart</tissue>
        <tissue>Kidney</tissue>
        <tissue>Liver</tissue>
        <tissue>Lung</tissue>
        <tissue>Spleen</tissue>
    </source>
</reference>
<reference key="9">
    <citation type="journal article" date="2013" name="Mol. Cell">
        <title>SIRT5-mediated lysine desuccinylation impacts diverse metabolic pathways.</title>
        <authorList>
            <person name="Park J."/>
            <person name="Chen Y."/>
            <person name="Tishkoff D.X."/>
            <person name="Peng C."/>
            <person name="Tan M."/>
            <person name="Dai L."/>
            <person name="Xie Z."/>
            <person name="Zhang Y."/>
            <person name="Zwaans B.M."/>
            <person name="Skinner M.E."/>
            <person name="Lombard D.B."/>
            <person name="Zhao Y."/>
        </authorList>
    </citation>
    <scope>ACETYLATION [LARGE SCALE ANALYSIS] AT LYS-247</scope>
    <scope>IDENTIFICATION BY MASS SPECTROMETRY [LARGE SCALE ANALYSIS]</scope>
    <source>
        <tissue>Embryonic fibroblast</tissue>
    </source>
</reference>